<proteinExistence type="evidence at protein level"/>
<accession>P0A1P4</accession>
<accession>P0A1P5</accession>
<accession>P22716</accession>
<gene>
    <name type="primary">rfbJ</name>
    <name type="ordered locus">STM2089</name>
</gene>
<name>RFBJ_SALTY</name>
<protein>
    <recommendedName>
        <fullName evidence="3">CDP-abequose synthase</fullName>
        <ecNumber evidence="5">1.1.1.341</ecNumber>
    </recommendedName>
    <alternativeName>
        <fullName>O4 antigen</fullName>
    </alternativeName>
</protein>
<organism>
    <name type="scientific">Salmonella typhimurium (strain LT2 / SGSC1412 / ATCC 700720)</name>
    <dbReference type="NCBI Taxonomy" id="99287"/>
    <lineage>
        <taxon>Bacteria</taxon>
        <taxon>Pseudomonadati</taxon>
        <taxon>Pseudomonadota</taxon>
        <taxon>Gammaproteobacteria</taxon>
        <taxon>Enterobacterales</taxon>
        <taxon>Enterobacteriaceae</taxon>
        <taxon>Salmonella</taxon>
    </lineage>
</organism>
<sequence length="299" mass="34106">MTFLKEYVIVSGASGFIGKHLLEALKKSGISVVAITRDVIKNNSNALANVRWCSWDNIELLVEELSIDSALIGIIHLATEYGHKTSSLINIEDANVIKPLKLLDLAIKYRADIFLNTDSFFAKKDFNYQHMRPYIITKRHFDEIGHYYANMHDISFVNMRLEHVYGPGDGENKFIPYIIDCLNKKQSCVKCTTGEQIRDFIFVDDVVNAYLTILENRKEVPSYTEYQVGTGAGVSLKDFLVYLQNTMMPGSSSIFEFGAIEQRDNEIMFSVANNKNLKAMGWKPNFDYKKGIEELLKRL</sequence>
<feature type="chain" id="PRO_0000183259" description="CDP-abequose synthase">
    <location>
        <begin position="1"/>
        <end position="299"/>
    </location>
</feature>
<feature type="active site" description="Proton acceptor" evidence="1">
    <location>
        <position position="134"/>
    </location>
</feature>
<feature type="binding site" evidence="1">
    <location>
        <position position="117"/>
    </location>
    <ligand>
        <name>substrate</name>
    </ligand>
</feature>
<comment type="catalytic activity">
    <reaction evidence="5">
        <text>CDP-alpha-D-abequose + NADP(+) = CDP-4-dehydro-3,6-dideoxy-alpha-D-glucose + NADPH + H(+)</text>
        <dbReference type="Rhea" id="RHEA:34563"/>
        <dbReference type="ChEBI" id="CHEBI:15378"/>
        <dbReference type="ChEBI" id="CHEBI:57783"/>
        <dbReference type="ChEBI" id="CHEBI:58349"/>
        <dbReference type="ChEBI" id="CHEBI:70783"/>
        <dbReference type="ChEBI" id="CHEBI:70784"/>
        <dbReference type="EC" id="1.1.1.341"/>
    </reaction>
</comment>
<comment type="pathway">
    <text evidence="2">Bacterial outer membrane biogenesis; LPS O-antigen biosynthesis.</text>
</comment>
<comment type="miscellaneous">
    <text>The functional difference between abequose synthase and paratose synthase lies in the side of the pyranose ring from which the keto group on carbon 4 is attacked in the reduction of CDP-4-keto-3,6-dideoxy-D-glucose.</text>
</comment>
<comment type="similarity">
    <text evidence="4">Belongs to the NAD(P)-dependent epimerase/dehydratase family.</text>
</comment>
<dbReference type="EC" id="1.1.1.341" evidence="5"/>
<dbReference type="EMBL" id="X56793">
    <property type="protein sequence ID" value="CAA40123.1"/>
    <property type="molecule type" value="Genomic_DNA"/>
</dbReference>
<dbReference type="EMBL" id="AE006468">
    <property type="protein sequence ID" value="AAL20993.1"/>
    <property type="molecule type" value="Genomic_DNA"/>
</dbReference>
<dbReference type="PIR" id="S15307">
    <property type="entry name" value="S15307"/>
</dbReference>
<dbReference type="RefSeq" id="NP_461034.1">
    <property type="nucleotide sequence ID" value="NC_003197.2"/>
</dbReference>
<dbReference type="RefSeq" id="WP_000143399.1">
    <property type="nucleotide sequence ID" value="NC_003197.2"/>
</dbReference>
<dbReference type="SMR" id="P0A1P4"/>
<dbReference type="STRING" id="99287.STM2089"/>
<dbReference type="PaxDb" id="99287-STM2089"/>
<dbReference type="GeneID" id="1253610"/>
<dbReference type="KEGG" id="stm:STM2089"/>
<dbReference type="PATRIC" id="fig|99287.12.peg.2211"/>
<dbReference type="HOGENOM" id="CLU_007383_1_7_6"/>
<dbReference type="OMA" id="FGAIPYR"/>
<dbReference type="PhylomeDB" id="P0A1P4"/>
<dbReference type="BioCyc" id="MetaCyc:MONOMER-13793"/>
<dbReference type="BioCyc" id="SENT99287:STM2089-MONOMER"/>
<dbReference type="BRENDA" id="1.1.1.341">
    <property type="organism ID" value="5542"/>
</dbReference>
<dbReference type="UniPathway" id="UPA00281"/>
<dbReference type="Proteomes" id="UP000001014">
    <property type="component" value="Chromosome"/>
</dbReference>
<dbReference type="GO" id="GO:0016491">
    <property type="term" value="F:oxidoreductase activity"/>
    <property type="evidence" value="ECO:0007669"/>
    <property type="project" value="UniProtKB-KW"/>
</dbReference>
<dbReference type="GO" id="GO:0009243">
    <property type="term" value="P:O antigen biosynthetic process"/>
    <property type="evidence" value="ECO:0007669"/>
    <property type="project" value="UniProtKB-UniPathway"/>
</dbReference>
<dbReference type="Gene3D" id="3.40.50.720">
    <property type="entry name" value="NAD(P)-binding Rossmann-like Domain"/>
    <property type="match status" value="1"/>
</dbReference>
<dbReference type="InterPro" id="IPR001509">
    <property type="entry name" value="Epimerase_deHydtase"/>
</dbReference>
<dbReference type="InterPro" id="IPR050177">
    <property type="entry name" value="Lipid_A_modif_metabolic_enz"/>
</dbReference>
<dbReference type="InterPro" id="IPR036291">
    <property type="entry name" value="NAD(P)-bd_dom_sf"/>
</dbReference>
<dbReference type="PANTHER" id="PTHR43245">
    <property type="entry name" value="BIFUNCTIONAL POLYMYXIN RESISTANCE PROTEIN ARNA"/>
    <property type="match status" value="1"/>
</dbReference>
<dbReference type="PANTHER" id="PTHR43245:SF13">
    <property type="entry name" value="UDP-D-APIOSE_UDP-D-XYLOSE SYNTHASE 2"/>
    <property type="match status" value="1"/>
</dbReference>
<dbReference type="Pfam" id="PF01370">
    <property type="entry name" value="Epimerase"/>
    <property type="match status" value="1"/>
</dbReference>
<dbReference type="SUPFAM" id="SSF51735">
    <property type="entry name" value="NAD(P)-binding Rossmann-fold domains"/>
    <property type="match status" value="1"/>
</dbReference>
<keyword id="KW-0448">Lipopolysaccharide biosynthesis</keyword>
<keyword id="KW-0521">NADP</keyword>
<keyword id="KW-0560">Oxidoreductase</keyword>
<keyword id="KW-1185">Reference proteome</keyword>
<reference key="1">
    <citation type="journal article" date="1989" name="J. Bacteriol.">
        <title>Identification and sequence of the gene for abequose synthase, which confers antigenic specificity on group B salmonellae: homology with galactose epimerase.</title>
        <authorList>
            <person name="Wyk P."/>
            <person name="Reeves P.R."/>
        </authorList>
    </citation>
    <scope>NUCLEOTIDE SEQUENCE [GENOMIC DNA]</scope>
    <scope>CATALYTIC ACTIVITY</scope>
    <scope>PATHWAY</scope>
    <source>
        <strain>LT2 / SL1654</strain>
    </source>
</reference>
<reference key="2">
    <citation type="journal article" date="1991" name="Mol. Microbiol.">
        <title>Structure and sequence of the rfb (O antigen) gene cluster of Salmonella serovar typhimurium (strain LT2).</title>
        <authorList>
            <person name="Jiang X.-M."/>
            <person name="Neal B."/>
            <person name="Santiago F."/>
            <person name="Lee S.J."/>
            <person name="Romana L.K."/>
            <person name="Reeves P.R."/>
        </authorList>
    </citation>
    <scope>NUCLEOTIDE SEQUENCE [GENOMIC DNA]</scope>
    <source>
        <strain>LT2</strain>
    </source>
</reference>
<reference key="3">
    <citation type="journal article" date="2001" name="Nature">
        <title>Complete genome sequence of Salmonella enterica serovar Typhimurium LT2.</title>
        <authorList>
            <person name="McClelland M."/>
            <person name="Sanderson K.E."/>
            <person name="Spieth J."/>
            <person name="Clifton S.W."/>
            <person name="Latreille P."/>
            <person name="Courtney L."/>
            <person name="Porwollik S."/>
            <person name="Ali J."/>
            <person name="Dante M."/>
            <person name="Du F."/>
            <person name="Hou S."/>
            <person name="Layman D."/>
            <person name="Leonard S."/>
            <person name="Nguyen C."/>
            <person name="Scott K."/>
            <person name="Holmes A."/>
            <person name="Grewal N."/>
            <person name="Mulvaney E."/>
            <person name="Ryan E."/>
            <person name="Sun H."/>
            <person name="Florea L."/>
            <person name="Miller W."/>
            <person name="Stoneking T."/>
            <person name="Nhan M."/>
            <person name="Waterston R."/>
            <person name="Wilson R.K."/>
        </authorList>
    </citation>
    <scope>NUCLEOTIDE SEQUENCE [LARGE SCALE GENOMIC DNA]</scope>
    <source>
        <strain>LT2 / SGSC1412 / ATCC 700720</strain>
    </source>
</reference>
<evidence type="ECO:0000250" key="1"/>
<evidence type="ECO:0000269" key="2">
    <source>
    </source>
</evidence>
<evidence type="ECO:0000303" key="3">
    <source>
    </source>
</evidence>
<evidence type="ECO:0000305" key="4"/>
<evidence type="ECO:0000305" key="5">
    <source>
    </source>
</evidence>